<gene>
    <name evidence="1" type="primary">aroD</name>
    <name type="ordered locus">lin0494</name>
</gene>
<name>AROD_LISIN</name>
<proteinExistence type="inferred from homology"/>
<accession>Q92EG6</accession>
<evidence type="ECO:0000255" key="1">
    <source>
        <dbReference type="HAMAP-Rule" id="MF_00214"/>
    </source>
</evidence>
<reference key="1">
    <citation type="journal article" date="2001" name="Science">
        <title>Comparative genomics of Listeria species.</title>
        <authorList>
            <person name="Glaser P."/>
            <person name="Frangeul L."/>
            <person name="Buchrieser C."/>
            <person name="Rusniok C."/>
            <person name="Amend A."/>
            <person name="Baquero F."/>
            <person name="Berche P."/>
            <person name="Bloecker H."/>
            <person name="Brandt P."/>
            <person name="Chakraborty T."/>
            <person name="Charbit A."/>
            <person name="Chetouani F."/>
            <person name="Couve E."/>
            <person name="de Daruvar A."/>
            <person name="Dehoux P."/>
            <person name="Domann E."/>
            <person name="Dominguez-Bernal G."/>
            <person name="Duchaud E."/>
            <person name="Durant L."/>
            <person name="Dussurget O."/>
            <person name="Entian K.-D."/>
            <person name="Fsihi H."/>
            <person name="Garcia-del Portillo F."/>
            <person name="Garrido P."/>
            <person name="Gautier L."/>
            <person name="Goebel W."/>
            <person name="Gomez-Lopez N."/>
            <person name="Hain T."/>
            <person name="Hauf J."/>
            <person name="Jackson D."/>
            <person name="Jones L.-M."/>
            <person name="Kaerst U."/>
            <person name="Kreft J."/>
            <person name="Kuhn M."/>
            <person name="Kunst F."/>
            <person name="Kurapkat G."/>
            <person name="Madueno E."/>
            <person name="Maitournam A."/>
            <person name="Mata Vicente J."/>
            <person name="Ng E."/>
            <person name="Nedjari H."/>
            <person name="Nordsiek G."/>
            <person name="Novella S."/>
            <person name="de Pablos B."/>
            <person name="Perez-Diaz J.-C."/>
            <person name="Purcell R."/>
            <person name="Remmel B."/>
            <person name="Rose M."/>
            <person name="Schlueter T."/>
            <person name="Simoes N."/>
            <person name="Tierrez A."/>
            <person name="Vazquez-Boland J.-A."/>
            <person name="Voss H."/>
            <person name="Wehland J."/>
            <person name="Cossart P."/>
        </authorList>
    </citation>
    <scope>NUCLEOTIDE SEQUENCE [LARGE SCALE GENOMIC DNA]</scope>
    <source>
        <strain>ATCC BAA-680 / CLIP 11262</strain>
    </source>
</reference>
<protein>
    <recommendedName>
        <fullName evidence="1">3-dehydroquinate dehydratase</fullName>
        <shortName evidence="1">3-dehydroquinase</shortName>
        <ecNumber evidence="1">4.2.1.10</ecNumber>
    </recommendedName>
    <alternativeName>
        <fullName evidence="1">Type I DHQase</fullName>
    </alternativeName>
    <alternativeName>
        <fullName evidence="1">Type I dehydroquinase</fullName>
        <shortName evidence="1">DHQ1</shortName>
    </alternativeName>
</protein>
<organism>
    <name type="scientific">Listeria innocua serovar 6a (strain ATCC BAA-680 / CLIP 11262)</name>
    <dbReference type="NCBI Taxonomy" id="272626"/>
    <lineage>
        <taxon>Bacteria</taxon>
        <taxon>Bacillati</taxon>
        <taxon>Bacillota</taxon>
        <taxon>Bacilli</taxon>
        <taxon>Bacillales</taxon>
        <taxon>Listeriaceae</taxon>
        <taxon>Listeria</taxon>
    </lineage>
</organism>
<dbReference type="EC" id="4.2.1.10" evidence="1"/>
<dbReference type="EMBL" id="AL596165">
    <property type="protein sequence ID" value="CAC95726.1"/>
    <property type="molecule type" value="Genomic_DNA"/>
</dbReference>
<dbReference type="PIR" id="AF1494">
    <property type="entry name" value="AF1494"/>
</dbReference>
<dbReference type="RefSeq" id="WP_010990446.1">
    <property type="nucleotide sequence ID" value="NC_003212.1"/>
</dbReference>
<dbReference type="SMR" id="Q92EG6"/>
<dbReference type="STRING" id="272626.gene:17564820"/>
<dbReference type="KEGG" id="lin:lin0494"/>
<dbReference type="eggNOG" id="COG0710">
    <property type="taxonomic scope" value="Bacteria"/>
</dbReference>
<dbReference type="HOGENOM" id="CLU_064444_0_0_9"/>
<dbReference type="OrthoDB" id="9813659at2"/>
<dbReference type="UniPathway" id="UPA00053">
    <property type="reaction ID" value="UER00086"/>
</dbReference>
<dbReference type="Proteomes" id="UP000002513">
    <property type="component" value="Chromosome"/>
</dbReference>
<dbReference type="GO" id="GO:0003855">
    <property type="term" value="F:3-dehydroquinate dehydratase activity"/>
    <property type="evidence" value="ECO:0007669"/>
    <property type="project" value="UniProtKB-UniRule"/>
</dbReference>
<dbReference type="GO" id="GO:0046279">
    <property type="term" value="P:3,4-dihydroxybenzoate biosynthetic process"/>
    <property type="evidence" value="ECO:0007669"/>
    <property type="project" value="UniProtKB-ARBA"/>
</dbReference>
<dbReference type="GO" id="GO:0008652">
    <property type="term" value="P:amino acid biosynthetic process"/>
    <property type="evidence" value="ECO:0007669"/>
    <property type="project" value="UniProtKB-KW"/>
</dbReference>
<dbReference type="GO" id="GO:0009073">
    <property type="term" value="P:aromatic amino acid family biosynthetic process"/>
    <property type="evidence" value="ECO:0007669"/>
    <property type="project" value="UniProtKB-KW"/>
</dbReference>
<dbReference type="GO" id="GO:0009423">
    <property type="term" value="P:chorismate biosynthetic process"/>
    <property type="evidence" value="ECO:0007669"/>
    <property type="project" value="UniProtKB-UniRule"/>
</dbReference>
<dbReference type="CDD" id="cd00502">
    <property type="entry name" value="DHQase_I"/>
    <property type="match status" value="1"/>
</dbReference>
<dbReference type="FunFam" id="3.20.20.70:FF:000047">
    <property type="entry name" value="3-dehydroquinate dehydratase"/>
    <property type="match status" value="1"/>
</dbReference>
<dbReference type="Gene3D" id="3.20.20.70">
    <property type="entry name" value="Aldolase class I"/>
    <property type="match status" value="1"/>
</dbReference>
<dbReference type="HAMAP" id="MF_00214">
    <property type="entry name" value="AroD"/>
    <property type="match status" value="1"/>
</dbReference>
<dbReference type="InterPro" id="IPR018508">
    <property type="entry name" value="3-dehydroquinate_DH_AS"/>
</dbReference>
<dbReference type="InterPro" id="IPR013785">
    <property type="entry name" value="Aldolase_TIM"/>
</dbReference>
<dbReference type="InterPro" id="IPR001381">
    <property type="entry name" value="DHquinase_I"/>
</dbReference>
<dbReference type="InterPro" id="IPR050146">
    <property type="entry name" value="Type-I_3-dehydroquinase"/>
</dbReference>
<dbReference type="NCBIfam" id="TIGR01093">
    <property type="entry name" value="aroD"/>
    <property type="match status" value="1"/>
</dbReference>
<dbReference type="PANTHER" id="PTHR43699">
    <property type="entry name" value="3-DEHYDROQUINATE DEHYDRATASE"/>
    <property type="match status" value="1"/>
</dbReference>
<dbReference type="PANTHER" id="PTHR43699:SF1">
    <property type="entry name" value="3-DEHYDROQUINATE DEHYDRATASE"/>
    <property type="match status" value="1"/>
</dbReference>
<dbReference type="Pfam" id="PF01487">
    <property type="entry name" value="DHquinase_I"/>
    <property type="match status" value="1"/>
</dbReference>
<dbReference type="SUPFAM" id="SSF51569">
    <property type="entry name" value="Aldolase"/>
    <property type="match status" value="1"/>
</dbReference>
<dbReference type="PROSITE" id="PS01028">
    <property type="entry name" value="DEHYDROQUINASE_I"/>
    <property type="match status" value="1"/>
</dbReference>
<comment type="function">
    <text evidence="1">Involved in the third step of the chorismate pathway, which leads to the biosynthesis of aromatic amino acids. Catalyzes the cis-dehydration of 3-dehydroquinate (DHQ) and introduces the first double bond of the aromatic ring to yield 3-dehydroshikimate.</text>
</comment>
<comment type="catalytic activity">
    <reaction evidence="1">
        <text>3-dehydroquinate = 3-dehydroshikimate + H2O</text>
        <dbReference type="Rhea" id="RHEA:21096"/>
        <dbReference type="ChEBI" id="CHEBI:15377"/>
        <dbReference type="ChEBI" id="CHEBI:16630"/>
        <dbReference type="ChEBI" id="CHEBI:32364"/>
        <dbReference type="EC" id="4.2.1.10"/>
    </reaction>
</comment>
<comment type="pathway">
    <text evidence="1">Metabolic intermediate biosynthesis; chorismate biosynthesis; chorismate from D-erythrose 4-phosphate and phosphoenolpyruvate: step 3/7.</text>
</comment>
<comment type="subunit">
    <text evidence="1">Homodimer.</text>
</comment>
<comment type="similarity">
    <text evidence="1">Belongs to the type-I 3-dehydroquinase family.</text>
</comment>
<keyword id="KW-0028">Amino-acid biosynthesis</keyword>
<keyword id="KW-0057">Aromatic amino acid biosynthesis</keyword>
<keyword id="KW-0456">Lyase</keyword>
<keyword id="KW-0704">Schiff base</keyword>
<feature type="chain" id="PRO_0000138799" description="3-dehydroquinate dehydratase">
    <location>
        <begin position="1"/>
        <end position="252"/>
    </location>
</feature>
<feature type="active site" description="Proton donor/acceptor" evidence="1">
    <location>
        <position position="143"/>
    </location>
</feature>
<feature type="active site" description="Schiff-base intermediate with substrate" evidence="1">
    <location>
        <position position="170"/>
    </location>
</feature>
<feature type="binding site" evidence="1">
    <location>
        <begin position="46"/>
        <end position="48"/>
    </location>
    <ligand>
        <name>3-dehydroquinate</name>
        <dbReference type="ChEBI" id="CHEBI:32364"/>
    </ligand>
</feature>
<feature type="binding site" evidence="1">
    <location>
        <position position="82"/>
    </location>
    <ligand>
        <name>3-dehydroquinate</name>
        <dbReference type="ChEBI" id="CHEBI:32364"/>
    </ligand>
</feature>
<feature type="binding site" evidence="1">
    <location>
        <position position="212"/>
    </location>
    <ligand>
        <name>3-dehydroquinate</name>
        <dbReference type="ChEBI" id="CHEBI:32364"/>
    </ligand>
</feature>
<feature type="binding site" evidence="1">
    <location>
        <position position="231"/>
    </location>
    <ligand>
        <name>3-dehydroquinate</name>
        <dbReference type="ChEBI" id="CHEBI:32364"/>
    </ligand>
</feature>
<feature type="binding site" evidence="1">
    <location>
        <position position="235"/>
    </location>
    <ligand>
        <name>3-dehydroquinate</name>
        <dbReference type="ChEBI" id="CHEBI:32364"/>
    </ligand>
</feature>
<sequence>MNKVVVKNVTFGEGAPKICVPMVGKTVAALKEEAEMLKTIDLDVVEWRVDFFEDVKDLVKVKAALDEIRAILPETPILFTFRSAKEGGELAVSDEFYFELNETLAGTGKIDLVDVELFNEEADVLRLIETAHKNNVKVVMSNHDFDKTPAKEEIVSRLTRMEALGADLPKIAVMPKSAGDVLTLLDATNTVSEKANQPIITMSMAGTGVISRLAGEVFGSAMTFGAAKKASAPGQIDVNELRHVLDLLHKQF</sequence>